<name>FPGS2_ARATH</name>
<protein>
    <recommendedName>
        <fullName evidence="2 11">Folylpolyglutamate synthase</fullName>
        <ecNumber evidence="3">6.3.2.17</ecNumber>
    </recommendedName>
    <alternativeName>
        <fullName evidence="10">DHFS-FPGS homolog C</fullName>
    </alternativeName>
    <alternativeName>
        <fullName evidence="2">Folylpoly-gamma-glutamate synthetase</fullName>
        <shortName evidence="2">FPGS</shortName>
    </alternativeName>
    <alternativeName>
        <fullName evidence="2">Tetrahydrofolylpolyglutamate synthase</fullName>
        <shortName evidence="2">Tetrahydrofolate synthase</shortName>
    </alternativeName>
</protein>
<proteinExistence type="evidence at protein level"/>
<sequence length="625" mass="68921">MLVCGKGFLKCRAPGVPFFCDKRKSFFTKTKRGFHSLPLGTGVRVYFNNNLRYSSNSIEVVEKAAINMGSKEDKADNPALSSYDDAMEALSTLISRRNRGDRTPTKGNRDKLEQVVTYLKILDLEDKIKELKVIHVAGTKGKGSTCVFSEAILRNCGFRTGMFTSPHLIDVRERFRIDGLDISEEKFLQYFWECWKLLKEKAVDGLTMPPLFQFLTVLAFKIFVCEKVDVAVIEVGLGGKLDSTNVIQKPVVCGIASLGMDHMDILGNTLADIAFHKAGIFKPQIPAFTVPQLSEAMDVLQKTANNLEVPLEVVAPLEPKKLDGVTLGLSGDHQLVNAGLAVSLSRCWLQRTGNWKKIFPNESKETEIPVAFCRGLATARLHGRAQVVHDVVSDPQDSSDSMETPCGDLIFYLDGAHSPESMEACGRWFSSAVRGDKSLSTAVNGYMRHGEYGTDLNRVSKQILLFNCMEVRDPQVLLPKLVTTCASSGTHFSRALFVPSMSTYNKVISGASAIPSDTRRKDLTWQFRLQRLWEKSIQGTDAGLDHTLKPDGITALPPHDFLCGDAPQCGGPAGTPVTSSAVMPSLPLTINWLRDCVRRNPSLKLEVLVTGSLHLVGDVLRLLKR</sequence>
<accession>F4J2K2</accession>
<accession>A2RVP0</accession>
<accession>Q8W038</accession>
<accession>Q9SR80</accession>
<reference evidence="8 11" key="1">
    <citation type="journal article" date="2001" name="Proc. Natl. Acad. Sci. U.S.A.">
        <title>Tetrahydrofolate biosynthesis in plants: molecular and functional characterization of dihydrofolate synthetase and three isoforms of folylpolyglutamate synthetase in Arabidopsis thaliana.</title>
        <authorList>
            <person name="Ravanel S."/>
            <person name="Cherest H."/>
            <person name="Jabrin S."/>
            <person name="Grunwald D."/>
            <person name="Surdin-Kerjan Y."/>
            <person name="Douce R."/>
            <person name="Rebeille F."/>
        </authorList>
    </citation>
    <scope>NUCLEOTIDE SEQUENCE [MRNA]</scope>
    <scope>FUNCTION</scope>
    <scope>CATALYTIC ACTIVITY</scope>
    <scope>SUBSTRATE SPECIFICITY</scope>
    <scope>SUBCELLULAR LOCATION</scope>
    <source>
        <strain evidence="3">cv. Wassilewskija</strain>
    </source>
</reference>
<reference evidence="10" key="2">
    <citation type="journal article" date="2000" name="Nature">
        <title>Sequence and analysis of chromosome 3 of the plant Arabidopsis thaliana.</title>
        <authorList>
            <person name="Salanoubat M."/>
            <person name="Lemcke K."/>
            <person name="Rieger M."/>
            <person name="Ansorge W."/>
            <person name="Unseld M."/>
            <person name="Fartmann B."/>
            <person name="Valle G."/>
            <person name="Bloecker H."/>
            <person name="Perez-Alonso M."/>
            <person name="Obermaier B."/>
            <person name="Delseny M."/>
            <person name="Boutry M."/>
            <person name="Grivell L.A."/>
            <person name="Mache R."/>
            <person name="Puigdomenech P."/>
            <person name="De Simone V."/>
            <person name="Choisne N."/>
            <person name="Artiguenave F."/>
            <person name="Robert C."/>
            <person name="Brottier P."/>
            <person name="Wincker P."/>
            <person name="Cattolico L."/>
            <person name="Weissenbach J."/>
            <person name="Saurin W."/>
            <person name="Quetier F."/>
            <person name="Schaefer M."/>
            <person name="Mueller-Auer S."/>
            <person name="Gabel C."/>
            <person name="Fuchs M."/>
            <person name="Benes V."/>
            <person name="Wurmbach E."/>
            <person name="Drzonek H."/>
            <person name="Erfle H."/>
            <person name="Jordan N."/>
            <person name="Bangert S."/>
            <person name="Wiedelmann R."/>
            <person name="Kranz H."/>
            <person name="Voss H."/>
            <person name="Holland R."/>
            <person name="Brandt P."/>
            <person name="Nyakatura G."/>
            <person name="Vezzi A."/>
            <person name="D'Angelo M."/>
            <person name="Pallavicini A."/>
            <person name="Toppo S."/>
            <person name="Simionati B."/>
            <person name="Conrad A."/>
            <person name="Hornischer K."/>
            <person name="Kauer G."/>
            <person name="Loehnert T.-H."/>
            <person name="Nordsiek G."/>
            <person name="Reichelt J."/>
            <person name="Scharfe M."/>
            <person name="Schoen O."/>
            <person name="Bargues M."/>
            <person name="Terol J."/>
            <person name="Climent J."/>
            <person name="Navarro P."/>
            <person name="Collado C."/>
            <person name="Perez-Perez A."/>
            <person name="Ottenwaelder B."/>
            <person name="Duchemin D."/>
            <person name="Cooke R."/>
            <person name="Laudie M."/>
            <person name="Berger-Llauro C."/>
            <person name="Purnelle B."/>
            <person name="Masuy D."/>
            <person name="de Haan M."/>
            <person name="Maarse A.C."/>
            <person name="Alcaraz J.-P."/>
            <person name="Cottet A."/>
            <person name="Casacuberta E."/>
            <person name="Monfort A."/>
            <person name="Argiriou A."/>
            <person name="Flores M."/>
            <person name="Liguori R."/>
            <person name="Vitale D."/>
            <person name="Mannhaupt G."/>
            <person name="Haase D."/>
            <person name="Schoof H."/>
            <person name="Rudd S."/>
            <person name="Zaccaria P."/>
            <person name="Mewes H.-W."/>
            <person name="Mayer K.F.X."/>
            <person name="Kaul S."/>
            <person name="Town C.D."/>
            <person name="Koo H.L."/>
            <person name="Tallon L.J."/>
            <person name="Jenkins J."/>
            <person name="Rooney T."/>
            <person name="Rizzo M."/>
            <person name="Walts A."/>
            <person name="Utterback T."/>
            <person name="Fujii C.Y."/>
            <person name="Shea T.P."/>
            <person name="Creasy T.H."/>
            <person name="Haas B."/>
            <person name="Maiti R."/>
            <person name="Wu D."/>
            <person name="Peterson J."/>
            <person name="Van Aken S."/>
            <person name="Pai G."/>
            <person name="Militscher J."/>
            <person name="Sellers P."/>
            <person name="Gill J.E."/>
            <person name="Feldblyum T.V."/>
            <person name="Preuss D."/>
            <person name="Lin X."/>
            <person name="Nierman W.C."/>
            <person name="Salzberg S.L."/>
            <person name="White O."/>
            <person name="Venter J.C."/>
            <person name="Fraser C.M."/>
            <person name="Kaneko T."/>
            <person name="Nakamura Y."/>
            <person name="Sato S."/>
            <person name="Kato T."/>
            <person name="Asamizu E."/>
            <person name="Sasamoto S."/>
            <person name="Kimura T."/>
            <person name="Idesawa K."/>
            <person name="Kawashima K."/>
            <person name="Kishida Y."/>
            <person name="Kiyokawa C."/>
            <person name="Kohara M."/>
            <person name="Matsumoto M."/>
            <person name="Matsuno A."/>
            <person name="Muraki A."/>
            <person name="Nakayama S."/>
            <person name="Nakazaki N."/>
            <person name="Shinpo S."/>
            <person name="Takeuchi C."/>
            <person name="Wada T."/>
            <person name="Watanabe A."/>
            <person name="Yamada M."/>
            <person name="Yasuda M."/>
            <person name="Tabata S."/>
        </authorList>
    </citation>
    <scope>NUCLEOTIDE SEQUENCE [LARGE SCALE GENOMIC DNA]</scope>
    <source>
        <strain>cv. Columbia</strain>
    </source>
</reference>
<reference evidence="8 10" key="3">
    <citation type="journal article" date="2017" name="Plant J.">
        <title>Araport11: a complete reannotation of the Arabidopsis thaliana reference genome.</title>
        <authorList>
            <person name="Cheng C.Y."/>
            <person name="Krishnakumar V."/>
            <person name="Chan A.P."/>
            <person name="Thibaud-Nissen F."/>
            <person name="Schobel S."/>
            <person name="Town C.D."/>
        </authorList>
    </citation>
    <scope>GENOME REANNOTATION</scope>
    <source>
        <strain>cv. Columbia</strain>
    </source>
</reference>
<reference evidence="8 10" key="4">
    <citation type="submission" date="2007-01" db="EMBL/GenBank/DDBJ databases">
        <title>Arabidopsis ORF clones.</title>
        <authorList>
            <person name="Bautista V.R."/>
            <person name="Kim C.J."/>
            <person name="Chen H."/>
            <person name="Wu S.Y."/>
            <person name="De Los Reyes C."/>
            <person name="Ecker J.R."/>
        </authorList>
    </citation>
    <scope>NUCLEOTIDE SEQUENCE [LARGE SCALE MRNA] OF 162-625</scope>
    <source>
        <strain evidence="9">cv. Columbia</strain>
    </source>
</reference>
<reference evidence="8" key="5">
    <citation type="journal article" date="2010" name="Plant J.">
        <title>Functional analysis of folate polyglutamylation and its essential role in plant metabolism and development.</title>
        <authorList>
            <person name="Mehrshahi P."/>
            <person name="Gonzalez-Jorge S."/>
            <person name="Akhtar T.A."/>
            <person name="Ward J.L."/>
            <person name="Santoyo-Castelazo A."/>
            <person name="Marcus S.E."/>
            <person name="Lara-Nunez A."/>
            <person name="Ravanel S."/>
            <person name="Hawkins N.D."/>
            <person name="Beale M.H."/>
            <person name="Barrett D.A."/>
            <person name="Knox J.P."/>
            <person name="Gregory J.F. III"/>
            <person name="Hanson A.D."/>
            <person name="Bennett M.J."/>
            <person name="Dellapenna D."/>
        </authorList>
    </citation>
    <scope>FUNCTION</scope>
    <scope>DISRUPTION PHENOTYPE</scope>
</reference>
<reference evidence="8" key="6">
    <citation type="journal article" date="2011" name="Plant Physiol.">
        <title>The folylpolyglutamate synthetase plastidial isoform is required for postembryonic root development in Arabidopsis.</title>
        <authorList>
            <person name="Srivastava A.C."/>
            <person name="Ramos-Parra P.A."/>
            <person name="Bedair M."/>
            <person name="Robledo-Hernandez A.L."/>
            <person name="Tang Y."/>
            <person name="Sumner L.W."/>
            <person name="Diaz de la Garza R.I."/>
            <person name="Blancaflor E.B."/>
        </authorList>
    </citation>
    <scope>DISRUPTION PHENOTYPE</scope>
</reference>
<organism>
    <name type="scientific">Arabidopsis thaliana</name>
    <name type="common">Mouse-ear cress</name>
    <dbReference type="NCBI Taxonomy" id="3702"/>
    <lineage>
        <taxon>Eukaryota</taxon>
        <taxon>Viridiplantae</taxon>
        <taxon>Streptophyta</taxon>
        <taxon>Embryophyta</taxon>
        <taxon>Tracheophyta</taxon>
        <taxon>Spermatophyta</taxon>
        <taxon>Magnoliopsida</taxon>
        <taxon>eudicotyledons</taxon>
        <taxon>Gunneridae</taxon>
        <taxon>Pentapetalae</taxon>
        <taxon>rosids</taxon>
        <taxon>malvids</taxon>
        <taxon>Brassicales</taxon>
        <taxon>Brassicaceae</taxon>
        <taxon>Camelineae</taxon>
        <taxon>Arabidopsis</taxon>
    </lineage>
</organism>
<comment type="function">
    <text evidence="2 3 4">Catalyzes conversion of folates to polyglutamate derivatives allowing concentration of folate compounds in the cell and the intracellular retention of these cofactors, which are important substrates for most of the folate-dependent enzymes that are involved in one-carbon transfer reactions involved in purine, pyrimidine and amino acid synthesis. Essential for organellar and whole-plant folate homeostasis.</text>
</comment>
<comment type="catalytic activity">
    <reaction evidence="3">
        <text>(6S)-5,6,7,8-tetrahydrofolyl-(gamma-L-Glu)(n) + L-glutamate + ATP = (6S)-5,6,7,8-tetrahydrofolyl-(gamma-L-Glu)(n+1) + ADP + phosphate + H(+)</text>
        <dbReference type="Rhea" id="RHEA:10580"/>
        <dbReference type="Rhea" id="RHEA-COMP:14738"/>
        <dbReference type="Rhea" id="RHEA-COMP:14740"/>
        <dbReference type="ChEBI" id="CHEBI:15378"/>
        <dbReference type="ChEBI" id="CHEBI:29985"/>
        <dbReference type="ChEBI" id="CHEBI:30616"/>
        <dbReference type="ChEBI" id="CHEBI:43474"/>
        <dbReference type="ChEBI" id="CHEBI:141005"/>
        <dbReference type="ChEBI" id="CHEBI:456216"/>
        <dbReference type="EC" id="6.3.2.17"/>
    </reaction>
</comment>
<comment type="cofactor">
    <cofactor evidence="2">
        <name>a monovalent cation</name>
        <dbReference type="ChEBI" id="CHEBI:60242"/>
    </cofactor>
    <text evidence="2">A monovalent cation.</text>
</comment>
<comment type="pathway">
    <text evidence="2">Cofactor biosynthesis; tetrahydrofolylpolyglutamate biosynthesis.</text>
</comment>
<comment type="subcellular location">
    <subcellularLocation>
        <location evidence="2">Mitochondrion inner membrane</location>
    </subcellularLocation>
    <subcellularLocation>
        <location evidence="3">Mitochondrion matrix</location>
    </subcellularLocation>
</comment>
<comment type="disruption phenotype">
    <text evidence="4 5">Vegetative phenotype does not differ visually from wild-type. No obvious defects in root development. Polyglutamylated folates still detectable, but loss of activity leads to a significant reduction (45%) in total foliar folate abundance compared to wild-type. The reduced total folate content is a result of reduced levels of 5-formyl-THF, 10-formyl and 5,10-methenyl-THF, 5-methyl-THF and THF (42, 42, 53 and 48%, respectively) compared to wild-type. The plastid and mitochondrial folate levels are also reduced by approximately 50 and 55%, respectively compared to wild-type. Folate polyglutamylation levels are significantly reduced but not abolished within the respective compartments. Combined loss of FPGS2 and FPGS1 result in embryo lethality. This double mutant has abnormal seeds that are readily distinguishable as albinos which do not proceed beyond the globular stage of embryogenesis. The absence of a developing embryo lead to collapse of seed walls, leaving shrivelled seed reamnants. Combined loss of FPGS2 and FPGS3 results in seedling lethality. Seedlings fail to proceed beyond the expanded cotyledon stage, exhibit an albino phenotype and are unable to thrive beyond germination.</text>
</comment>
<comment type="similarity">
    <text evidence="2">Belongs to the folylpolyglutamate synthase family.</text>
</comment>
<comment type="sequence caution" evidence="8">
    <conflict type="erroneous gene model prediction">
        <sequence resource="EMBL-CDS" id="AAF04408"/>
    </conflict>
</comment>
<dbReference type="EC" id="6.3.2.17" evidence="3"/>
<dbReference type="EMBL" id="AJ271786">
    <property type="protein sequence ID" value="CAC81075.1"/>
    <property type="molecule type" value="mRNA"/>
</dbReference>
<dbReference type="EMBL" id="AC010927">
    <property type="protein sequence ID" value="AAF04408.1"/>
    <property type="status" value="ALT_SEQ"/>
    <property type="molecule type" value="Genomic_DNA"/>
</dbReference>
<dbReference type="EMBL" id="CP002686">
    <property type="protein sequence ID" value="AEE74866.1"/>
    <property type="molecule type" value="Genomic_DNA"/>
</dbReference>
<dbReference type="EMBL" id="BT030031">
    <property type="protein sequence ID" value="ABN04769.1"/>
    <property type="molecule type" value="mRNA"/>
</dbReference>
<dbReference type="RefSeq" id="NP_187627.3">
    <property type="nucleotide sequence ID" value="NM_111851.6"/>
</dbReference>
<dbReference type="SMR" id="F4J2K2"/>
<dbReference type="FunCoup" id="F4J2K2">
    <property type="interactions" value="3125"/>
</dbReference>
<dbReference type="STRING" id="3702.F4J2K2"/>
<dbReference type="iPTMnet" id="F4J2K2"/>
<dbReference type="PaxDb" id="3702-AT3G10160.1"/>
<dbReference type="ProteomicsDB" id="230110"/>
<dbReference type="EnsemblPlants" id="AT3G10160.1">
    <property type="protein sequence ID" value="AT3G10160.1"/>
    <property type="gene ID" value="AT3G10160"/>
</dbReference>
<dbReference type="GeneID" id="820179"/>
<dbReference type="Gramene" id="AT3G10160.1">
    <property type="protein sequence ID" value="AT3G10160.1"/>
    <property type="gene ID" value="AT3G10160"/>
</dbReference>
<dbReference type="KEGG" id="ath:AT3G10160"/>
<dbReference type="Araport" id="AT3G10160"/>
<dbReference type="TAIR" id="AT3G10160">
    <property type="gene designation" value="DFC"/>
</dbReference>
<dbReference type="eggNOG" id="KOG2525">
    <property type="taxonomic scope" value="Eukaryota"/>
</dbReference>
<dbReference type="HOGENOM" id="CLU_015869_0_2_1"/>
<dbReference type="InParanoid" id="F4J2K2"/>
<dbReference type="OMA" id="LDRMLMY"/>
<dbReference type="BRENDA" id="6.3.2.17">
    <property type="organism ID" value="399"/>
</dbReference>
<dbReference type="UniPathway" id="UPA00850"/>
<dbReference type="PRO" id="PR:F4J2K2"/>
<dbReference type="Proteomes" id="UP000006548">
    <property type="component" value="Chromosome 3"/>
</dbReference>
<dbReference type="ExpressionAtlas" id="F4J2K2">
    <property type="expression patterns" value="baseline and differential"/>
</dbReference>
<dbReference type="GO" id="GO:0005743">
    <property type="term" value="C:mitochondrial inner membrane"/>
    <property type="evidence" value="ECO:0007669"/>
    <property type="project" value="UniProtKB-SubCell"/>
</dbReference>
<dbReference type="GO" id="GO:0005759">
    <property type="term" value="C:mitochondrial matrix"/>
    <property type="evidence" value="ECO:0007669"/>
    <property type="project" value="UniProtKB-SubCell"/>
</dbReference>
<dbReference type="GO" id="GO:0005524">
    <property type="term" value="F:ATP binding"/>
    <property type="evidence" value="ECO:0007669"/>
    <property type="project" value="UniProtKB-KW"/>
</dbReference>
<dbReference type="GO" id="GO:0046872">
    <property type="term" value="F:metal ion binding"/>
    <property type="evidence" value="ECO:0007669"/>
    <property type="project" value="UniProtKB-KW"/>
</dbReference>
<dbReference type="GO" id="GO:0004326">
    <property type="term" value="F:tetrahydrofolylpolyglutamate synthase activity"/>
    <property type="evidence" value="ECO:0000315"/>
    <property type="project" value="TAIR"/>
</dbReference>
<dbReference type="GO" id="GO:0006730">
    <property type="term" value="P:one-carbon metabolic process"/>
    <property type="evidence" value="ECO:0007669"/>
    <property type="project" value="UniProtKB-KW"/>
</dbReference>
<dbReference type="GO" id="GO:0009853">
    <property type="term" value="P:photorespiration"/>
    <property type="evidence" value="ECO:0000315"/>
    <property type="project" value="TAIR"/>
</dbReference>
<dbReference type="GO" id="GO:0090351">
    <property type="term" value="P:seedling development"/>
    <property type="evidence" value="ECO:0000315"/>
    <property type="project" value="TAIR"/>
</dbReference>
<dbReference type="FunFam" id="3.40.1190.10:FF:000017">
    <property type="entry name" value="Folylpolyglutamate synthase"/>
    <property type="match status" value="1"/>
</dbReference>
<dbReference type="FunFam" id="3.90.190.20:FF:000011">
    <property type="entry name" value="Folylpolyglutamate synthase"/>
    <property type="match status" value="1"/>
</dbReference>
<dbReference type="Gene3D" id="3.90.190.20">
    <property type="entry name" value="Mur ligase, C-terminal domain"/>
    <property type="match status" value="1"/>
</dbReference>
<dbReference type="Gene3D" id="3.40.1190.10">
    <property type="entry name" value="Mur-like, catalytic domain"/>
    <property type="match status" value="1"/>
</dbReference>
<dbReference type="InterPro" id="IPR001645">
    <property type="entry name" value="Folylpolyglutamate_synth"/>
</dbReference>
<dbReference type="InterPro" id="IPR018109">
    <property type="entry name" value="Folylpolyglutamate_synth_CS"/>
</dbReference>
<dbReference type="InterPro" id="IPR036565">
    <property type="entry name" value="Mur-like_cat_sf"/>
</dbReference>
<dbReference type="InterPro" id="IPR036615">
    <property type="entry name" value="Mur_ligase_C_dom_sf"/>
</dbReference>
<dbReference type="NCBIfam" id="TIGR01499">
    <property type="entry name" value="folC"/>
    <property type="match status" value="1"/>
</dbReference>
<dbReference type="PANTHER" id="PTHR11136:SF5">
    <property type="entry name" value="FOLYLPOLYGLUTAMATE SYNTHASE, MITOCHONDRIAL"/>
    <property type="match status" value="1"/>
</dbReference>
<dbReference type="PANTHER" id="PTHR11136">
    <property type="entry name" value="FOLYLPOLYGLUTAMATE SYNTHASE-RELATED"/>
    <property type="match status" value="1"/>
</dbReference>
<dbReference type="SUPFAM" id="SSF53623">
    <property type="entry name" value="MurD-like peptide ligases, catalytic domain"/>
    <property type="match status" value="1"/>
</dbReference>
<dbReference type="SUPFAM" id="SSF53244">
    <property type="entry name" value="MurD-like peptide ligases, peptide-binding domain"/>
    <property type="match status" value="1"/>
</dbReference>
<dbReference type="PROSITE" id="PS01012">
    <property type="entry name" value="FOLYLPOLYGLU_SYNT_2"/>
    <property type="match status" value="1"/>
</dbReference>
<keyword id="KW-0067">ATP-binding</keyword>
<keyword id="KW-0436">Ligase</keyword>
<keyword id="KW-0460">Magnesium</keyword>
<keyword id="KW-0472">Membrane</keyword>
<keyword id="KW-0479">Metal-binding</keyword>
<keyword id="KW-0496">Mitochondrion</keyword>
<keyword id="KW-0999">Mitochondrion inner membrane</keyword>
<keyword id="KW-0547">Nucleotide-binding</keyword>
<keyword id="KW-0554">One-carbon metabolism</keyword>
<keyword id="KW-1185">Reference proteome</keyword>
<feature type="chain" id="PRO_0000414486" description="Folylpolyglutamate synthase">
    <location>
        <begin position="1"/>
        <end position="625"/>
    </location>
</feature>
<feature type="binding site" evidence="1">
    <location>
        <begin position="141"/>
        <end position="144"/>
    </location>
    <ligand>
        <name>ATP</name>
        <dbReference type="ChEBI" id="CHEBI:30616"/>
    </ligand>
</feature>
<feature type="binding site" evidence="1">
    <location>
        <position position="165"/>
    </location>
    <ligand>
        <name>Mg(2+)</name>
        <dbReference type="ChEBI" id="CHEBI:18420"/>
        <label>1</label>
    </ligand>
</feature>
<feature type="binding site" evidence="1">
    <location>
        <position position="234"/>
    </location>
    <ligand>
        <name>Mg(2+)</name>
        <dbReference type="ChEBI" id="CHEBI:18420"/>
        <label>1</label>
    </ligand>
</feature>
<feature type="binding site" evidence="1">
    <location>
        <position position="262"/>
    </location>
    <ligand>
        <name>Mg(2+)</name>
        <dbReference type="ChEBI" id="CHEBI:18420"/>
        <label>2</label>
    </ligand>
</feature>
<feature type="binding site" evidence="1">
    <location>
        <position position="384"/>
    </location>
    <ligand>
        <name>ATP</name>
        <dbReference type="ChEBI" id="CHEBI:30616"/>
    </ligand>
</feature>
<feature type="binding site" evidence="1">
    <location>
        <position position="414"/>
    </location>
    <ligand>
        <name>ATP</name>
        <dbReference type="ChEBI" id="CHEBI:30616"/>
    </ligand>
</feature>
<feature type="sequence conflict" description="In Ref. 1; CAC81075." evidence="8" ref="1">
    <original>E</original>
    <variation>Q</variation>
    <location>
        <position position="420"/>
    </location>
</feature>
<feature type="sequence conflict" description="In Ref. 1; CAC81075." evidence="8" ref="1">
    <original>G</original>
    <variation>D</variation>
    <location>
        <position position="489"/>
    </location>
</feature>
<gene>
    <name evidence="7" type="primary">FPGS2</name>
    <name evidence="10" type="synonym">ATDFC</name>
    <name evidence="10" type="synonym">DFC</name>
    <name evidence="11" type="synonym">FPGS3</name>
    <name evidence="6" type="synonym">FPGSC</name>
    <name type="ordered locus">At3g10160</name>
    <name type="ORF">T22K18.1</name>
</gene>
<evidence type="ECO:0000250" key="1">
    <source>
        <dbReference type="UniProtKB" id="P08192"/>
    </source>
</evidence>
<evidence type="ECO:0000250" key="2">
    <source>
        <dbReference type="UniProtKB" id="Q05932"/>
    </source>
</evidence>
<evidence type="ECO:0000269" key="3">
    <source>
    </source>
</evidence>
<evidence type="ECO:0000269" key="4">
    <source>
    </source>
</evidence>
<evidence type="ECO:0000269" key="5">
    <source>
    </source>
</evidence>
<evidence type="ECO:0000303" key="6">
    <source>
    </source>
</evidence>
<evidence type="ECO:0000303" key="7">
    <source>
    </source>
</evidence>
<evidence type="ECO:0000305" key="8"/>
<evidence type="ECO:0000312" key="9">
    <source>
        <dbReference type="EMBL" id="ABN04769.1"/>
    </source>
</evidence>
<evidence type="ECO:0000312" key="10">
    <source>
        <dbReference type="EMBL" id="AEE74866.1"/>
    </source>
</evidence>
<evidence type="ECO:0000312" key="11">
    <source>
        <dbReference type="EMBL" id="CAC81075.1"/>
    </source>
</evidence>